<protein>
    <recommendedName>
        <fullName evidence="1">NAD(P)H-quinone oxidoreductase subunit 1, chloroplastic</fullName>
        <ecNumber evidence="1">7.1.1.-</ecNumber>
    </recommendedName>
    <alternativeName>
        <fullName evidence="1">NAD(P)H dehydrogenase subunit 1</fullName>
        <shortName evidence="1">NDH subunit 1</shortName>
    </alternativeName>
    <alternativeName>
        <fullName evidence="1">NADH-plastoquinone oxidoreductase subunit 1</fullName>
    </alternativeName>
</protein>
<comment type="function">
    <text evidence="1">NDH shuttles electrons from NAD(P)H:plastoquinone, via FMN and iron-sulfur (Fe-S) centers, to quinones in the photosynthetic chain and possibly in a chloroplast respiratory chain. The immediate electron acceptor for the enzyme in this species is believed to be plastoquinone. Couples the redox reaction to proton translocation, and thus conserves the redox energy in a proton gradient.</text>
</comment>
<comment type="catalytic activity">
    <reaction evidence="1">
        <text>a plastoquinone + NADH + (n+1) H(+)(in) = a plastoquinol + NAD(+) + n H(+)(out)</text>
        <dbReference type="Rhea" id="RHEA:42608"/>
        <dbReference type="Rhea" id="RHEA-COMP:9561"/>
        <dbReference type="Rhea" id="RHEA-COMP:9562"/>
        <dbReference type="ChEBI" id="CHEBI:15378"/>
        <dbReference type="ChEBI" id="CHEBI:17757"/>
        <dbReference type="ChEBI" id="CHEBI:57540"/>
        <dbReference type="ChEBI" id="CHEBI:57945"/>
        <dbReference type="ChEBI" id="CHEBI:62192"/>
    </reaction>
</comment>
<comment type="catalytic activity">
    <reaction evidence="1">
        <text>a plastoquinone + NADPH + (n+1) H(+)(in) = a plastoquinol + NADP(+) + n H(+)(out)</text>
        <dbReference type="Rhea" id="RHEA:42612"/>
        <dbReference type="Rhea" id="RHEA-COMP:9561"/>
        <dbReference type="Rhea" id="RHEA-COMP:9562"/>
        <dbReference type="ChEBI" id="CHEBI:15378"/>
        <dbReference type="ChEBI" id="CHEBI:17757"/>
        <dbReference type="ChEBI" id="CHEBI:57783"/>
        <dbReference type="ChEBI" id="CHEBI:58349"/>
        <dbReference type="ChEBI" id="CHEBI:62192"/>
    </reaction>
</comment>
<comment type="subunit">
    <text evidence="1">NDH is composed of at least 16 different subunits, 5 of which are encoded in the nucleus.</text>
</comment>
<comment type="subcellular location">
    <subcellularLocation>
        <location evidence="1">Plastid</location>
        <location evidence="1">Chloroplast thylakoid membrane</location>
        <topology evidence="1">Multi-pass membrane protein</topology>
    </subcellularLocation>
</comment>
<comment type="similarity">
    <text evidence="1">Belongs to the complex I subunit 1 family.</text>
</comment>
<evidence type="ECO:0000255" key="1">
    <source>
        <dbReference type="HAMAP-Rule" id="MF_01350"/>
    </source>
</evidence>
<accession>A4QLG4</accession>
<gene>
    <name evidence="1" type="primary">ndhA</name>
</gene>
<keyword id="KW-0150">Chloroplast</keyword>
<keyword id="KW-0472">Membrane</keyword>
<keyword id="KW-0520">NAD</keyword>
<keyword id="KW-0521">NADP</keyword>
<keyword id="KW-0934">Plastid</keyword>
<keyword id="KW-0618">Plastoquinone</keyword>
<keyword id="KW-0874">Quinone</keyword>
<keyword id="KW-0793">Thylakoid</keyword>
<keyword id="KW-1278">Translocase</keyword>
<keyword id="KW-0812">Transmembrane</keyword>
<keyword id="KW-1133">Transmembrane helix</keyword>
<sequence>MIIYATAVQTINSFVRLESLKEVYGLIWIFVPIFSLVLGIITGVLVIVWLEREISAGIQQRIGPEYAGPLGILQALADGTKLLFKENLRPSRGNTPLFSIGPSIAVISILLSYSVIPFSNHLVLADLNIGIFLWIAISSIAPIGLLMSGYGSNNKYSFLGGLRAAAQSISYEIPLTLCVLSISLLSNSLSTVDIVEAQSKYGFWGWNLWRQPIGFIIFLISSLAECERLPFDLPEAEEELIAGYQTEYSGIKFGLFYVASYLNLLISSLFVTVLYLGGWNISIPYISILELFQRDQIFGTTIGIFITLAKTYLFLFISIATRWTLPRLRMDQLLNLGWKFLLPISLGNLLLTTSFQLFSL</sequence>
<geneLocation type="chloroplast"/>
<name>NU1C_LEPVR</name>
<organism>
    <name type="scientific">Lepidium virginicum</name>
    <name type="common">Virginia pepperweed</name>
    <dbReference type="NCBI Taxonomy" id="59292"/>
    <lineage>
        <taxon>Eukaryota</taxon>
        <taxon>Viridiplantae</taxon>
        <taxon>Streptophyta</taxon>
        <taxon>Embryophyta</taxon>
        <taxon>Tracheophyta</taxon>
        <taxon>Spermatophyta</taxon>
        <taxon>Magnoliopsida</taxon>
        <taxon>eudicotyledons</taxon>
        <taxon>Gunneridae</taxon>
        <taxon>Pentapetalae</taxon>
        <taxon>rosids</taxon>
        <taxon>malvids</taxon>
        <taxon>Brassicales</taxon>
        <taxon>Brassicaceae</taxon>
        <taxon>Lepidieae</taxon>
        <taxon>Lepidium</taxon>
    </lineage>
</organism>
<proteinExistence type="inferred from homology"/>
<reference key="1">
    <citation type="submission" date="2007-03" db="EMBL/GenBank/DDBJ databases">
        <title>Sequencing analysis of Lepidium virginicum JO26 chloroplast DNA.</title>
        <authorList>
            <person name="Hosouchi T."/>
            <person name="Tsuruoka H."/>
            <person name="Kotani H."/>
        </authorList>
    </citation>
    <scope>NUCLEOTIDE SEQUENCE [LARGE SCALE GENOMIC DNA]</scope>
    <source>
        <strain>JO26</strain>
    </source>
</reference>
<dbReference type="EC" id="7.1.1.-" evidence="1"/>
<dbReference type="EMBL" id="AP009374">
    <property type="protein sequence ID" value="BAF50519.1"/>
    <property type="molecule type" value="Genomic_DNA"/>
</dbReference>
<dbReference type="RefSeq" id="YP_001123694.1">
    <property type="nucleotide sequence ID" value="NC_009273.1"/>
</dbReference>
<dbReference type="SMR" id="A4QLG4"/>
<dbReference type="GeneID" id="4962051"/>
<dbReference type="GO" id="GO:0009535">
    <property type="term" value="C:chloroplast thylakoid membrane"/>
    <property type="evidence" value="ECO:0007669"/>
    <property type="project" value="UniProtKB-SubCell"/>
</dbReference>
<dbReference type="GO" id="GO:0003954">
    <property type="term" value="F:NADH dehydrogenase activity"/>
    <property type="evidence" value="ECO:0007669"/>
    <property type="project" value="TreeGrafter"/>
</dbReference>
<dbReference type="GO" id="GO:0016655">
    <property type="term" value="F:oxidoreductase activity, acting on NAD(P)H, quinone or similar compound as acceptor"/>
    <property type="evidence" value="ECO:0007669"/>
    <property type="project" value="UniProtKB-UniRule"/>
</dbReference>
<dbReference type="GO" id="GO:0048038">
    <property type="term" value="F:quinone binding"/>
    <property type="evidence" value="ECO:0007669"/>
    <property type="project" value="UniProtKB-KW"/>
</dbReference>
<dbReference type="GO" id="GO:0009060">
    <property type="term" value="P:aerobic respiration"/>
    <property type="evidence" value="ECO:0007669"/>
    <property type="project" value="TreeGrafter"/>
</dbReference>
<dbReference type="GO" id="GO:0019684">
    <property type="term" value="P:photosynthesis, light reaction"/>
    <property type="evidence" value="ECO:0007669"/>
    <property type="project" value="UniProtKB-UniRule"/>
</dbReference>
<dbReference type="HAMAP" id="MF_01350">
    <property type="entry name" value="NDH1_NuoH"/>
    <property type="match status" value="1"/>
</dbReference>
<dbReference type="InterPro" id="IPR001694">
    <property type="entry name" value="NADH_UbQ_OxRdtase_su1/FPO"/>
</dbReference>
<dbReference type="InterPro" id="IPR018086">
    <property type="entry name" value="NADH_UbQ_OxRdtase_su1_CS"/>
</dbReference>
<dbReference type="NCBIfam" id="NF004741">
    <property type="entry name" value="PRK06076.1-2"/>
    <property type="match status" value="1"/>
</dbReference>
<dbReference type="PANTHER" id="PTHR11432">
    <property type="entry name" value="NADH DEHYDROGENASE SUBUNIT 1"/>
    <property type="match status" value="1"/>
</dbReference>
<dbReference type="PANTHER" id="PTHR11432:SF3">
    <property type="entry name" value="NADH-UBIQUINONE OXIDOREDUCTASE CHAIN 1"/>
    <property type="match status" value="1"/>
</dbReference>
<dbReference type="Pfam" id="PF00146">
    <property type="entry name" value="NADHdh"/>
    <property type="match status" value="1"/>
</dbReference>
<dbReference type="PROSITE" id="PS00667">
    <property type="entry name" value="COMPLEX1_ND1_1"/>
    <property type="match status" value="1"/>
</dbReference>
<dbReference type="PROSITE" id="PS00668">
    <property type="entry name" value="COMPLEX1_ND1_2"/>
    <property type="match status" value="1"/>
</dbReference>
<feature type="chain" id="PRO_0000298872" description="NAD(P)H-quinone oxidoreductase subunit 1, chloroplastic">
    <location>
        <begin position="1"/>
        <end position="360"/>
    </location>
</feature>
<feature type="transmembrane region" description="Helical" evidence="1">
    <location>
        <begin position="27"/>
        <end position="47"/>
    </location>
</feature>
<feature type="transmembrane region" description="Helical" evidence="1">
    <location>
        <begin position="98"/>
        <end position="118"/>
    </location>
</feature>
<feature type="transmembrane region" description="Helical" evidence="1">
    <location>
        <begin position="129"/>
        <end position="149"/>
    </location>
</feature>
<feature type="transmembrane region" description="Helical" evidence="1">
    <location>
        <begin position="165"/>
        <end position="185"/>
    </location>
</feature>
<feature type="transmembrane region" description="Helical" evidence="1">
    <location>
        <begin position="203"/>
        <end position="223"/>
    </location>
</feature>
<feature type="transmembrane region" description="Helical" evidence="1">
    <location>
        <begin position="248"/>
        <end position="268"/>
    </location>
</feature>
<feature type="transmembrane region" description="Helical" evidence="1">
    <location>
        <begin position="269"/>
        <end position="289"/>
    </location>
</feature>
<feature type="transmembrane region" description="Helical" evidence="1">
    <location>
        <begin position="297"/>
        <end position="317"/>
    </location>
</feature>
<feature type="transmembrane region" description="Helical" evidence="1">
    <location>
        <begin position="340"/>
        <end position="360"/>
    </location>
</feature>